<name>HSLV_ACTPJ</name>
<feature type="chain" id="PRO_1000100867" description="ATP-dependent protease subunit HslV">
    <location>
        <begin position="1"/>
        <end position="173"/>
    </location>
</feature>
<feature type="active site" evidence="1">
    <location>
        <position position="2"/>
    </location>
</feature>
<feature type="binding site" evidence="1">
    <location>
        <position position="158"/>
    </location>
    <ligand>
        <name>Na(+)</name>
        <dbReference type="ChEBI" id="CHEBI:29101"/>
    </ligand>
</feature>
<feature type="binding site" evidence="1">
    <location>
        <position position="161"/>
    </location>
    <ligand>
        <name>Na(+)</name>
        <dbReference type="ChEBI" id="CHEBI:29101"/>
    </ligand>
</feature>
<feature type="binding site" evidence="1">
    <location>
        <position position="164"/>
    </location>
    <ligand>
        <name>Na(+)</name>
        <dbReference type="ChEBI" id="CHEBI:29101"/>
    </ligand>
</feature>
<evidence type="ECO:0000255" key="1">
    <source>
        <dbReference type="HAMAP-Rule" id="MF_00248"/>
    </source>
</evidence>
<comment type="function">
    <text evidence="1">Protease subunit of a proteasome-like degradation complex believed to be a general protein degrading machinery.</text>
</comment>
<comment type="catalytic activity">
    <reaction evidence="1">
        <text>ATP-dependent cleavage of peptide bonds with broad specificity.</text>
        <dbReference type="EC" id="3.4.25.2"/>
    </reaction>
</comment>
<comment type="activity regulation">
    <text evidence="1">Allosterically activated by HslU binding.</text>
</comment>
<comment type="subunit">
    <text evidence="1">A double ring-shaped homohexamer of HslV is capped on each side by a ring-shaped HslU homohexamer. The assembly of the HslU/HslV complex is dependent on binding of ATP.</text>
</comment>
<comment type="subcellular location">
    <subcellularLocation>
        <location evidence="1">Cytoplasm</location>
    </subcellularLocation>
</comment>
<comment type="similarity">
    <text evidence="1">Belongs to the peptidase T1B family. HslV subfamily.</text>
</comment>
<accession>B0BSG5</accession>
<reference key="1">
    <citation type="journal article" date="2008" name="PLoS ONE">
        <title>Genome biology of Actinobacillus pleuropneumoniae JL03, an isolate of serotype 3 prevalent in China.</title>
        <authorList>
            <person name="Xu Z."/>
            <person name="Zhou Y."/>
            <person name="Li L."/>
            <person name="Zhou R."/>
            <person name="Xiao S."/>
            <person name="Wan Y."/>
            <person name="Zhang S."/>
            <person name="Wang K."/>
            <person name="Li W."/>
            <person name="Li L."/>
            <person name="Jin H."/>
            <person name="Kang M."/>
            <person name="Dalai B."/>
            <person name="Li T."/>
            <person name="Liu L."/>
            <person name="Cheng Y."/>
            <person name="Zhang L."/>
            <person name="Xu T."/>
            <person name="Zheng H."/>
            <person name="Pu S."/>
            <person name="Wang B."/>
            <person name="Gu W."/>
            <person name="Zhang X.L."/>
            <person name="Zhu G.-F."/>
            <person name="Wang S."/>
            <person name="Zhao G.-P."/>
            <person name="Chen H."/>
        </authorList>
    </citation>
    <scope>NUCLEOTIDE SEQUENCE [LARGE SCALE GENOMIC DNA]</scope>
    <source>
        <strain>JL03</strain>
    </source>
</reference>
<dbReference type="EC" id="3.4.25.2" evidence="1"/>
<dbReference type="EMBL" id="CP000687">
    <property type="protein sequence ID" value="ABY70322.1"/>
    <property type="molecule type" value="Genomic_DNA"/>
</dbReference>
<dbReference type="RefSeq" id="WP_005618211.1">
    <property type="nucleotide sequence ID" value="NC_010278.1"/>
</dbReference>
<dbReference type="SMR" id="B0BSG5"/>
<dbReference type="MEROPS" id="T01.006"/>
<dbReference type="KEGG" id="apj:APJL_1772"/>
<dbReference type="HOGENOM" id="CLU_093872_1_0_6"/>
<dbReference type="Proteomes" id="UP000008547">
    <property type="component" value="Chromosome"/>
</dbReference>
<dbReference type="GO" id="GO:0009376">
    <property type="term" value="C:HslUV protease complex"/>
    <property type="evidence" value="ECO:0007669"/>
    <property type="project" value="UniProtKB-UniRule"/>
</dbReference>
<dbReference type="GO" id="GO:0005839">
    <property type="term" value="C:proteasome core complex"/>
    <property type="evidence" value="ECO:0007669"/>
    <property type="project" value="InterPro"/>
</dbReference>
<dbReference type="GO" id="GO:0046872">
    <property type="term" value="F:metal ion binding"/>
    <property type="evidence" value="ECO:0007669"/>
    <property type="project" value="UniProtKB-KW"/>
</dbReference>
<dbReference type="GO" id="GO:0004298">
    <property type="term" value="F:threonine-type endopeptidase activity"/>
    <property type="evidence" value="ECO:0007669"/>
    <property type="project" value="UniProtKB-KW"/>
</dbReference>
<dbReference type="GO" id="GO:0051603">
    <property type="term" value="P:proteolysis involved in protein catabolic process"/>
    <property type="evidence" value="ECO:0007669"/>
    <property type="project" value="InterPro"/>
</dbReference>
<dbReference type="CDD" id="cd01913">
    <property type="entry name" value="protease_HslV"/>
    <property type="match status" value="1"/>
</dbReference>
<dbReference type="FunFam" id="3.60.20.10:FF:000002">
    <property type="entry name" value="ATP-dependent protease subunit HslV"/>
    <property type="match status" value="1"/>
</dbReference>
<dbReference type="Gene3D" id="3.60.20.10">
    <property type="entry name" value="Glutamine Phosphoribosylpyrophosphate, subunit 1, domain 1"/>
    <property type="match status" value="1"/>
</dbReference>
<dbReference type="HAMAP" id="MF_00248">
    <property type="entry name" value="HslV"/>
    <property type="match status" value="1"/>
</dbReference>
<dbReference type="InterPro" id="IPR022281">
    <property type="entry name" value="ATP-dep_Prtase_HsIV_su"/>
</dbReference>
<dbReference type="InterPro" id="IPR029055">
    <property type="entry name" value="Ntn_hydrolases_N"/>
</dbReference>
<dbReference type="InterPro" id="IPR001353">
    <property type="entry name" value="Proteasome_sua/b"/>
</dbReference>
<dbReference type="InterPro" id="IPR023333">
    <property type="entry name" value="Proteasome_suB-type"/>
</dbReference>
<dbReference type="NCBIfam" id="TIGR03692">
    <property type="entry name" value="ATP_dep_HslV"/>
    <property type="match status" value="1"/>
</dbReference>
<dbReference type="NCBIfam" id="NF003964">
    <property type="entry name" value="PRK05456.1"/>
    <property type="match status" value="1"/>
</dbReference>
<dbReference type="PANTHER" id="PTHR32194:SF0">
    <property type="entry name" value="ATP-DEPENDENT PROTEASE SUBUNIT HSLV"/>
    <property type="match status" value="1"/>
</dbReference>
<dbReference type="PANTHER" id="PTHR32194">
    <property type="entry name" value="METALLOPROTEASE TLDD"/>
    <property type="match status" value="1"/>
</dbReference>
<dbReference type="Pfam" id="PF00227">
    <property type="entry name" value="Proteasome"/>
    <property type="match status" value="1"/>
</dbReference>
<dbReference type="PIRSF" id="PIRSF039093">
    <property type="entry name" value="HslV"/>
    <property type="match status" value="1"/>
</dbReference>
<dbReference type="SUPFAM" id="SSF56235">
    <property type="entry name" value="N-terminal nucleophile aminohydrolases (Ntn hydrolases)"/>
    <property type="match status" value="1"/>
</dbReference>
<dbReference type="PROSITE" id="PS51476">
    <property type="entry name" value="PROTEASOME_BETA_2"/>
    <property type="match status" value="1"/>
</dbReference>
<organism>
    <name type="scientific">Actinobacillus pleuropneumoniae serotype 3 (strain JL03)</name>
    <dbReference type="NCBI Taxonomy" id="434271"/>
    <lineage>
        <taxon>Bacteria</taxon>
        <taxon>Pseudomonadati</taxon>
        <taxon>Pseudomonadota</taxon>
        <taxon>Gammaproteobacteria</taxon>
        <taxon>Pasteurellales</taxon>
        <taxon>Pasteurellaceae</taxon>
        <taxon>Actinobacillus</taxon>
    </lineage>
</organism>
<protein>
    <recommendedName>
        <fullName evidence="1">ATP-dependent protease subunit HslV</fullName>
        <ecNumber evidence="1">3.4.25.2</ecNumber>
    </recommendedName>
</protein>
<gene>
    <name evidence="1" type="primary">hslV</name>
    <name type="ordered locus">APJL_1772</name>
</gene>
<proteinExistence type="inferred from homology"/>
<keyword id="KW-0021">Allosteric enzyme</keyword>
<keyword id="KW-0963">Cytoplasm</keyword>
<keyword id="KW-0378">Hydrolase</keyword>
<keyword id="KW-0479">Metal-binding</keyword>
<keyword id="KW-0645">Protease</keyword>
<keyword id="KW-0915">Sodium</keyword>
<keyword id="KW-0888">Threonine protease</keyword>
<sequence>MTTIVCVRKDGKVAIGGDGQATLGNCVEKGTVRKVRRMYKDKVVTGFAGSTADAFILRDLFEKKLELHQGHLIKSAVELAKEWRTERSLRKLEAMMIVANESEFLLVSGSGDVIEPEQDVLAIGSGGNYAKAAALALLRTENNLSAKEIVAEALKIAGDIDIYSNHNHVIEEV</sequence>